<proteinExistence type="inferred from homology"/>
<organism>
    <name type="scientific">Cryptococcus neoformans var. neoformans serotype D (strain B-3501A)</name>
    <name type="common">Filobasidiella neoformans</name>
    <dbReference type="NCBI Taxonomy" id="283643"/>
    <lineage>
        <taxon>Eukaryota</taxon>
        <taxon>Fungi</taxon>
        <taxon>Dikarya</taxon>
        <taxon>Basidiomycota</taxon>
        <taxon>Agaricomycotina</taxon>
        <taxon>Tremellomycetes</taxon>
        <taxon>Tremellales</taxon>
        <taxon>Cryptococcaceae</taxon>
        <taxon>Cryptococcus</taxon>
        <taxon>Cryptococcus neoformans species complex</taxon>
    </lineage>
</organism>
<keyword id="KW-0456">Lyase</keyword>
<feature type="chain" id="PRO_0000410055" description="Cyanate hydratase">
    <location>
        <begin position="1"/>
        <end position="183"/>
    </location>
</feature>
<feature type="active site" evidence="1">
    <location>
        <position position="118"/>
    </location>
</feature>
<feature type="active site" evidence="1">
    <location>
        <position position="121"/>
    </location>
</feature>
<feature type="active site" evidence="1">
    <location>
        <position position="144"/>
    </location>
</feature>
<protein>
    <recommendedName>
        <fullName evidence="1">Cyanate hydratase</fullName>
        <shortName evidence="1">Cyanase</shortName>
        <ecNumber evidence="1">4.2.1.104</ecNumber>
    </recommendedName>
    <alternativeName>
        <fullName evidence="1">Cyanate hydrolase</fullName>
    </alternativeName>
    <alternativeName>
        <fullName evidence="1">Cyanate lyase</fullName>
    </alternativeName>
</protein>
<accession>P0CN03</accession>
<accession>Q55UD8</accession>
<accession>Q5KI07</accession>
<name>CYNS_CRYNB</name>
<gene>
    <name evidence="1" type="primary">CYN1</name>
    <name type="ordered locus">CNBD1690</name>
</gene>
<evidence type="ECO:0000255" key="1">
    <source>
        <dbReference type="HAMAP-Rule" id="MF_03139"/>
    </source>
</evidence>
<comment type="function">
    <text evidence="1">Catalyzes the reaction of cyanate with bicarbonate to produce ammonia and carbon dioxide.</text>
</comment>
<comment type="catalytic activity">
    <reaction evidence="1">
        <text>cyanate + hydrogencarbonate + 3 H(+) = NH4(+) + 2 CO2</text>
        <dbReference type="Rhea" id="RHEA:11120"/>
        <dbReference type="ChEBI" id="CHEBI:15378"/>
        <dbReference type="ChEBI" id="CHEBI:16526"/>
        <dbReference type="ChEBI" id="CHEBI:17544"/>
        <dbReference type="ChEBI" id="CHEBI:28938"/>
        <dbReference type="ChEBI" id="CHEBI:29195"/>
        <dbReference type="EC" id="4.2.1.104"/>
    </reaction>
</comment>
<comment type="similarity">
    <text evidence="1">Belongs to the cyanase family.</text>
</comment>
<sequence length="183" mass="20538">MFNLPYHCKALLTAKQERGLTFDDVAKAINKPEVWTTALFYGQASTDKSTAEAILKALGGEQFWTDYNDRLEAGQEKIDIRRVLNGLSGNGEENMGVKGMVTRGATFEVPPKDPVLYRLYEVLVVYGYSYKALIYEKFGDGIMSAIDFRTSLERKKDPKGDRVVITMDGKFLPYSDPSAWGTQ</sequence>
<dbReference type="EC" id="4.2.1.104" evidence="1"/>
<dbReference type="EMBL" id="AAEY01000019">
    <property type="protein sequence ID" value="EAL21474.1"/>
    <property type="molecule type" value="Genomic_DNA"/>
</dbReference>
<dbReference type="RefSeq" id="XP_776121.1">
    <property type="nucleotide sequence ID" value="XM_771028.1"/>
</dbReference>
<dbReference type="SMR" id="P0CN03"/>
<dbReference type="EnsemblFungi" id="AAW43296">
    <property type="protein sequence ID" value="AAW43296"/>
    <property type="gene ID" value="CND04630"/>
</dbReference>
<dbReference type="GeneID" id="4935558"/>
<dbReference type="KEGG" id="cnb:CNBD1690"/>
<dbReference type="VEuPathDB" id="FungiDB:CNBD1690"/>
<dbReference type="HOGENOM" id="CLU_103452_1_0_1"/>
<dbReference type="OrthoDB" id="2145at5206"/>
<dbReference type="GO" id="GO:0008824">
    <property type="term" value="F:cyanate hydratase activity"/>
    <property type="evidence" value="ECO:0007669"/>
    <property type="project" value="UniProtKB-UniRule"/>
</dbReference>
<dbReference type="GO" id="GO:0003677">
    <property type="term" value="F:DNA binding"/>
    <property type="evidence" value="ECO:0007669"/>
    <property type="project" value="InterPro"/>
</dbReference>
<dbReference type="GO" id="GO:0009439">
    <property type="term" value="P:cyanate metabolic process"/>
    <property type="evidence" value="ECO:0007669"/>
    <property type="project" value="UniProtKB-UniRule"/>
</dbReference>
<dbReference type="CDD" id="cd00559">
    <property type="entry name" value="Cyanase_C"/>
    <property type="match status" value="1"/>
</dbReference>
<dbReference type="Gene3D" id="3.30.1160.10">
    <property type="entry name" value="Cyanate lyase, C-terminal domain"/>
    <property type="match status" value="1"/>
</dbReference>
<dbReference type="Gene3D" id="1.10.260.40">
    <property type="entry name" value="lambda repressor-like DNA-binding domains"/>
    <property type="match status" value="1"/>
</dbReference>
<dbReference type="HAMAP" id="MF_00535">
    <property type="entry name" value="Cyanate_hydrat"/>
    <property type="match status" value="1"/>
</dbReference>
<dbReference type="InterPro" id="IPR008076">
    <property type="entry name" value="Cyanase"/>
</dbReference>
<dbReference type="InterPro" id="IPR003712">
    <property type="entry name" value="Cyanate_lyase_C"/>
</dbReference>
<dbReference type="InterPro" id="IPR036581">
    <property type="entry name" value="Cyanate_lyase_C_sf"/>
</dbReference>
<dbReference type="InterPro" id="IPR048564">
    <property type="entry name" value="CYNS_N"/>
</dbReference>
<dbReference type="InterPro" id="IPR010982">
    <property type="entry name" value="Lambda_DNA-bd_dom_sf"/>
</dbReference>
<dbReference type="PANTHER" id="PTHR34186">
    <property type="entry name" value="CYANATE HYDRATASE"/>
    <property type="match status" value="1"/>
</dbReference>
<dbReference type="PANTHER" id="PTHR34186:SF2">
    <property type="entry name" value="CYANATE HYDRATASE"/>
    <property type="match status" value="1"/>
</dbReference>
<dbReference type="Pfam" id="PF02560">
    <property type="entry name" value="Cyanate_lyase"/>
    <property type="match status" value="1"/>
</dbReference>
<dbReference type="Pfam" id="PF21291">
    <property type="entry name" value="CYNS_N"/>
    <property type="match status" value="1"/>
</dbReference>
<dbReference type="PIRSF" id="PIRSF001263">
    <property type="entry name" value="Cyanate_hydratas"/>
    <property type="match status" value="1"/>
</dbReference>
<dbReference type="PRINTS" id="PR01693">
    <property type="entry name" value="CYANASE"/>
</dbReference>
<dbReference type="SMART" id="SM01116">
    <property type="entry name" value="Cyanate_lyase"/>
    <property type="match status" value="1"/>
</dbReference>
<dbReference type="SUPFAM" id="SSF55234">
    <property type="entry name" value="Cyanase C-terminal domain"/>
    <property type="match status" value="1"/>
</dbReference>
<dbReference type="SUPFAM" id="SSF47413">
    <property type="entry name" value="lambda repressor-like DNA-binding domains"/>
    <property type="match status" value="1"/>
</dbReference>
<reference key="1">
    <citation type="journal article" date="2005" name="Science">
        <title>The genome of the basidiomycetous yeast and human pathogen Cryptococcus neoformans.</title>
        <authorList>
            <person name="Loftus B.J."/>
            <person name="Fung E."/>
            <person name="Roncaglia P."/>
            <person name="Rowley D."/>
            <person name="Amedeo P."/>
            <person name="Bruno D."/>
            <person name="Vamathevan J."/>
            <person name="Miranda M."/>
            <person name="Anderson I.J."/>
            <person name="Fraser J.A."/>
            <person name="Allen J.E."/>
            <person name="Bosdet I.E."/>
            <person name="Brent M.R."/>
            <person name="Chiu R."/>
            <person name="Doering T.L."/>
            <person name="Donlin M.J."/>
            <person name="D'Souza C.A."/>
            <person name="Fox D.S."/>
            <person name="Grinberg V."/>
            <person name="Fu J."/>
            <person name="Fukushima M."/>
            <person name="Haas B.J."/>
            <person name="Huang J.C."/>
            <person name="Janbon G."/>
            <person name="Jones S.J.M."/>
            <person name="Koo H.L."/>
            <person name="Krzywinski M.I."/>
            <person name="Kwon-Chung K.J."/>
            <person name="Lengeler K.B."/>
            <person name="Maiti R."/>
            <person name="Marra M.A."/>
            <person name="Marra R.E."/>
            <person name="Mathewson C.A."/>
            <person name="Mitchell T.G."/>
            <person name="Pertea M."/>
            <person name="Riggs F.R."/>
            <person name="Salzberg S.L."/>
            <person name="Schein J.E."/>
            <person name="Shvartsbeyn A."/>
            <person name="Shin H."/>
            <person name="Shumway M."/>
            <person name="Specht C.A."/>
            <person name="Suh B.B."/>
            <person name="Tenney A."/>
            <person name="Utterback T.R."/>
            <person name="Wickes B.L."/>
            <person name="Wortman J.R."/>
            <person name="Wye N.H."/>
            <person name="Kronstad J.W."/>
            <person name="Lodge J.K."/>
            <person name="Heitman J."/>
            <person name="Davis R.W."/>
            <person name="Fraser C.M."/>
            <person name="Hyman R.W."/>
        </authorList>
    </citation>
    <scope>NUCLEOTIDE SEQUENCE [LARGE SCALE GENOMIC DNA]</scope>
    <source>
        <strain>B-3501A</strain>
    </source>
</reference>